<name>HEMA_INCEN</name>
<organism>
    <name type="scientific">Influenza C virus (strain C/England/892/1983)</name>
    <dbReference type="NCBI Taxonomy" id="11556"/>
    <lineage>
        <taxon>Viruses</taxon>
        <taxon>Riboviria</taxon>
        <taxon>Orthornavirae</taxon>
        <taxon>Negarnaviricota</taxon>
        <taxon>Polyploviricotina</taxon>
        <taxon>Insthoviricetes</taxon>
        <taxon>Articulavirales</taxon>
        <taxon>Orthomyxoviridae</taxon>
        <taxon>Gammainfluenzavirus</taxon>
        <taxon>Gammainfluenzavirus influenzae</taxon>
        <taxon>Influenza C virus</taxon>
    </lineage>
</organism>
<keyword id="KW-1015">Disulfide bond</keyword>
<keyword id="KW-1170">Fusion of virus membrane with host endosomal membrane</keyword>
<keyword id="KW-1168">Fusion of virus membrane with host membrane</keyword>
<keyword id="KW-0325">Glycoprotein</keyword>
<keyword id="KW-0348">Hemagglutinin</keyword>
<keyword id="KW-1032">Host cell membrane</keyword>
<keyword id="KW-1043">Host membrane</keyword>
<keyword id="KW-0945">Host-virus interaction</keyword>
<keyword id="KW-0378">Hydrolase</keyword>
<keyword id="KW-0472">Membrane</keyword>
<keyword id="KW-0732">Signal</keyword>
<keyword id="KW-0812">Transmembrane</keyword>
<keyword id="KW-1133">Transmembrane helix</keyword>
<keyword id="KW-1161">Viral attachment to host cell</keyword>
<keyword id="KW-0261">Viral envelope protein</keyword>
<keyword id="KW-1162">Viral penetration into host cytoplasm</keyword>
<keyword id="KW-0946">Virion</keyword>
<keyword id="KW-1160">Virus entry into host cell</keyword>
<proteinExistence type="inferred from homology"/>
<accession>P07973</accession>
<dbReference type="EC" id="3.1.1.53"/>
<dbReference type="EMBL" id="M11642">
    <property type="protein sequence ID" value="AAA43783.1"/>
    <property type="molecule type" value="Genomic_RNA"/>
</dbReference>
<dbReference type="SMR" id="P07973"/>
<dbReference type="GlyCosmos" id="P07973">
    <property type="glycosylation" value="4 sites, No reported glycans"/>
</dbReference>
<dbReference type="GO" id="GO:0020002">
    <property type="term" value="C:host cell plasma membrane"/>
    <property type="evidence" value="ECO:0007669"/>
    <property type="project" value="UniProtKB-SubCell"/>
</dbReference>
<dbReference type="GO" id="GO:0016020">
    <property type="term" value="C:membrane"/>
    <property type="evidence" value="ECO:0007669"/>
    <property type="project" value="UniProtKB-KW"/>
</dbReference>
<dbReference type="GO" id="GO:0019031">
    <property type="term" value="C:viral envelope"/>
    <property type="evidence" value="ECO:0007669"/>
    <property type="project" value="UniProtKB-KW"/>
</dbReference>
<dbReference type="GO" id="GO:0055036">
    <property type="term" value="C:virion membrane"/>
    <property type="evidence" value="ECO:0007669"/>
    <property type="project" value="UniProtKB-SubCell"/>
</dbReference>
<dbReference type="GO" id="GO:0046789">
    <property type="term" value="F:host cell surface receptor binding"/>
    <property type="evidence" value="ECO:0007669"/>
    <property type="project" value="InterPro"/>
</dbReference>
<dbReference type="GO" id="GO:0106331">
    <property type="term" value="F:sialate 4-O-acetylesterase activity"/>
    <property type="evidence" value="ECO:0007669"/>
    <property type="project" value="RHEA"/>
</dbReference>
<dbReference type="GO" id="GO:0106330">
    <property type="term" value="F:sialate 9-O-acetylesterase activity"/>
    <property type="evidence" value="ECO:0007669"/>
    <property type="project" value="RHEA"/>
</dbReference>
<dbReference type="GO" id="GO:0039654">
    <property type="term" value="P:fusion of virus membrane with host endosome membrane"/>
    <property type="evidence" value="ECO:0007669"/>
    <property type="project" value="UniProtKB-KW"/>
</dbReference>
<dbReference type="GO" id="GO:0019064">
    <property type="term" value="P:fusion of virus membrane with host plasma membrane"/>
    <property type="evidence" value="ECO:0007669"/>
    <property type="project" value="InterPro"/>
</dbReference>
<dbReference type="GO" id="GO:0046718">
    <property type="term" value="P:symbiont entry into host cell"/>
    <property type="evidence" value="ECO:0007669"/>
    <property type="project" value="UniProtKB-KW"/>
</dbReference>
<dbReference type="GO" id="GO:0019062">
    <property type="term" value="P:virion attachment to host cell"/>
    <property type="evidence" value="ECO:0007669"/>
    <property type="project" value="UniProtKB-KW"/>
</dbReference>
<dbReference type="Gene3D" id="2.20.70.20">
    <property type="match status" value="2"/>
</dbReference>
<dbReference type="Gene3D" id="3.90.20.10">
    <property type="match status" value="1"/>
</dbReference>
<dbReference type="InterPro" id="IPR008980">
    <property type="entry name" value="Capsid_hemagglutn"/>
</dbReference>
<dbReference type="InterPro" id="IPR007142">
    <property type="entry name" value="Hemagglutn-estrase_core"/>
</dbReference>
<dbReference type="InterPro" id="IPR003860">
    <property type="entry name" value="Hemagglutn-estrase_hemagglutn"/>
</dbReference>
<dbReference type="InterPro" id="IPR014831">
    <property type="entry name" value="Hemagglutn_stalk_influenz-C"/>
</dbReference>
<dbReference type="Pfam" id="PF03996">
    <property type="entry name" value="Hema_esterase"/>
    <property type="match status" value="1"/>
</dbReference>
<dbReference type="Pfam" id="PF02710">
    <property type="entry name" value="Hema_HEFG"/>
    <property type="match status" value="1"/>
</dbReference>
<dbReference type="Pfam" id="PF08720">
    <property type="entry name" value="Hema_stalk"/>
    <property type="match status" value="1"/>
</dbReference>
<dbReference type="SUPFAM" id="SSF58064">
    <property type="entry name" value="Influenza hemagglutinin (stalk)"/>
    <property type="match status" value="1"/>
</dbReference>
<dbReference type="SUPFAM" id="SSF52266">
    <property type="entry name" value="SGNH hydrolase"/>
    <property type="match status" value="1"/>
</dbReference>
<dbReference type="SUPFAM" id="SSF49818">
    <property type="entry name" value="Viral protein domain"/>
    <property type="match status" value="1"/>
</dbReference>
<evidence type="ECO:0000250" key="1"/>
<evidence type="ECO:0000255" key="2"/>
<evidence type="ECO:0000305" key="3"/>
<reference key="1">
    <citation type="journal article" date="1985" name="Virology">
        <title>Noncumulative sequence changes in the hemagglutinin genes of influenza C virus isolates.</title>
        <authorList>
            <person name="Buonagurio D.A."/>
            <person name="Nakada S."/>
            <person name="Desselberger U."/>
            <person name="Krystal M."/>
            <person name="Palese P."/>
        </authorList>
    </citation>
    <scope>NUCLEOTIDE SEQUENCE [GENOMIC RNA]</scope>
</reference>
<feature type="signal peptide">
    <location>
        <begin position="1" status="less than"/>
        <end position="1"/>
    </location>
</feature>
<feature type="chain" id="PRO_0000039146" description="Hemagglutinin-esterase-fusion glycoprotein chain 1">
    <location>
        <begin position="2"/>
        <end position="433"/>
    </location>
</feature>
<feature type="chain" id="PRO_0000039147" description="Hemagglutinin-esterase-fusion glycoprotein chain 2">
    <location>
        <begin position="434"/>
        <end position="642"/>
    </location>
</feature>
<feature type="topological domain" description="Extracellular" evidence="2">
    <location>
        <begin position="2"/>
        <end position="617"/>
    </location>
</feature>
<feature type="transmembrane region" description="Helical" evidence="2">
    <location>
        <begin position="618"/>
        <end position="638"/>
    </location>
</feature>
<feature type="topological domain" description="Cytoplasmic" evidence="2">
    <location>
        <begin position="639"/>
        <end position="642"/>
    </location>
</feature>
<feature type="region of interest" description="Fusion domain-1" evidence="1">
    <location>
        <begin position="2"/>
        <end position="27"/>
    </location>
</feature>
<feature type="region of interest" description="Esterase domain-1" evidence="1">
    <location>
        <begin position="28"/>
        <end position="138"/>
    </location>
</feature>
<feature type="region of interest" description="N-acetyl-9-O-acetylneuraminic acid binding" evidence="1">
    <location>
        <begin position="138"/>
        <end position="297"/>
    </location>
</feature>
<feature type="region of interest" description="Esterase domain-2" evidence="1">
    <location>
        <begin position="298"/>
        <end position="352"/>
    </location>
</feature>
<feature type="region of interest" description="Fusion domain-2" evidence="1">
    <location>
        <begin position="353"/>
        <end position="638"/>
    </location>
</feature>
<feature type="active site" description="Nucleophile" evidence="1">
    <location>
        <position position="58"/>
    </location>
</feature>
<feature type="active site" description="Charge relay system" evidence="1">
    <location>
        <position position="353"/>
    </location>
</feature>
<feature type="active site" description="Charge relay system" evidence="1">
    <location>
        <position position="356"/>
    </location>
</feature>
<feature type="glycosylation site" description="N-linked (GlcNAc...) asparagine; by host" evidence="2">
    <location>
        <position position="13"/>
    </location>
</feature>
<feature type="glycosylation site" description="N-linked (GlcNAc...) asparagine; by host" evidence="2">
    <location>
        <position position="48"/>
    </location>
</feature>
<feature type="glycosylation site" description="N-linked (GlcNAc...) asparagine; by host" evidence="2">
    <location>
        <position position="131"/>
    </location>
</feature>
<feature type="glycosylation site" description="N-linked (GlcNAc...) asparagine; by host" evidence="2">
    <location>
        <position position="382"/>
    </location>
</feature>
<feature type="disulfide bond" description="Interchain (between HEF1 and HEF2 chains)" evidence="1">
    <location>
        <begin position="7"/>
        <end position="570"/>
    </location>
</feature>
<feature type="disulfide bond" evidence="1">
    <location>
        <begin position="107"/>
        <end position="152"/>
    </location>
</feature>
<feature type="disulfide bond" evidence="1">
    <location>
        <begin position="127"/>
        <end position="175"/>
    </location>
</feature>
<feature type="disulfide bond" evidence="1">
    <location>
        <begin position="197"/>
        <end position="239"/>
    </location>
</feature>
<feature type="disulfide bond" evidence="1">
    <location>
        <begin position="216"/>
        <end position="303"/>
    </location>
</feature>
<feature type="disulfide bond" evidence="1">
    <location>
        <begin position="224"/>
        <end position="276"/>
    </location>
</feature>
<feature type="disulfide bond" evidence="1">
    <location>
        <begin position="333"/>
        <end position="339"/>
    </location>
</feature>
<feature type="non-terminal residue">
    <location>
        <position position="1"/>
    </location>
</feature>
<sequence>AEKIKICLQKQVNSSFSLHNGFGGNLYATEEKRMFELVKPKAGASVLNQSTWICFGDSRTDQSNSAFPRSADVSAKTADKFRSLSGGSLMLSMFGPPGKVDYLYQGCGKHKVFYEGVNWSPHAAIDCYRKNWTDIKLNFQKSIYELASQSHCMSLVNALDKTIPLQVTKGVAKNCNNSFLKNPALYTQEVKPLEQICGEENLAFFTLPTQFGTYECKLHLVASCYFIYDSKEVYNKRGCGNYFQVIYDSSGKVVGGLDNRVSPYTGNTGDTPTMQCDMLQLKPGRYSVRSSPRFLLMPERSYCFDMKEKGLVTAVQSIWGKGRKSDYAVDQACLSTPGCMLIQKQKPYIGEADDHHGDQEMRELLSGLDYEARCISQSGWVNETSPFTEEYLLPPKFGRCPLAAKEESIPKIPDGLLIPTSGTDTTVTKPKSRIFGIDDLIIGLLFVAIVEAGIGGYLLGSRKESGGGVTKESAEKGFEKIGNDIQILRSSTNIAIEKLNDRITHDEQAIRDLTLEIENARSEALLGELGIIRALLVGNISIGLQESLWELASEITNRAGDLAVEVSPGCWIIDDNICDQSCQNFIFKFNETAPVPTIPPLDTKIDLQSDPFYWGSSLGLAITTPISLAALVISGIAICRTK</sequence>
<gene>
    <name type="primary">HE</name>
</gene>
<comment type="function">
    <text evidence="1">Binds to the N-acetyl-9-O-acetylneuraminic acid residues on the cell surface, bringing about the attachment of the virus particle to the cell. Plays a major role in the determination of host range restriction and virulence. Class I viral fusion protein. Responsible for penetration of the virus into the cell cytoplasm by mediating the fusion of the membrane of the endocytosed virus particle with the endosomal membrane. Low pH in endosomes induce an irreversible conformational change in HEF2, releasing the fusion hydrophobic peptide. Several trimers are required to form a competent fusion pore. Displays a receptor-destroying activity which is a neuraminidate-O-acetyl esterase. This activity cleaves off any receptor on the cell surface, which would otherwise prevent virions release. These cleavages prevent self-aggregation and ensure the efficient spread of the progeny virus from cell to cell (By similarity).</text>
</comment>
<comment type="catalytic activity">
    <reaction>
        <text>N-acetyl-9-O-acetylneuraminate + H2O = N-acetylneuraminate + acetate + H(+)</text>
        <dbReference type="Rhea" id="RHEA:22600"/>
        <dbReference type="ChEBI" id="CHEBI:15377"/>
        <dbReference type="ChEBI" id="CHEBI:15378"/>
        <dbReference type="ChEBI" id="CHEBI:28999"/>
        <dbReference type="ChEBI" id="CHEBI:30089"/>
        <dbReference type="ChEBI" id="CHEBI:35418"/>
        <dbReference type="EC" id="3.1.1.53"/>
    </reaction>
</comment>
<comment type="catalytic activity">
    <reaction>
        <text>N-acetyl-4-O-acetylneuraminate + H2O = N-acetylneuraminate + acetate + H(+)</text>
        <dbReference type="Rhea" id="RHEA:25564"/>
        <dbReference type="ChEBI" id="CHEBI:15377"/>
        <dbReference type="ChEBI" id="CHEBI:15378"/>
        <dbReference type="ChEBI" id="CHEBI:29006"/>
        <dbReference type="ChEBI" id="CHEBI:30089"/>
        <dbReference type="ChEBI" id="CHEBI:35418"/>
        <dbReference type="EC" id="3.1.1.53"/>
    </reaction>
</comment>
<comment type="subunit">
    <text evidence="1">Homotrimer of disulfide-linked HEF1-HEF2.</text>
</comment>
<comment type="subcellular location">
    <subcellularLocation>
        <location evidence="3">Virion membrane</location>
        <topology evidence="3">Single-pass type I membrane protein</topology>
    </subcellularLocation>
    <subcellularLocation>
        <location evidence="1">Host cell membrane</location>
        <topology evidence="1">Single-pass type I membrane protein</topology>
    </subcellularLocation>
</comment>
<comment type="PTM">
    <text evidence="1">In natural infection, inactive HEF is matured into HEF1 and HEF2 outside the cell by one or more trypsin-like, arginine-specific endoprotease.</text>
</comment>
<comment type="similarity">
    <text evidence="3">Belongs to the influenza type C/coronaviruses hemagglutinin-esterase family.</text>
</comment>
<protein>
    <recommendedName>
        <fullName>Hemagglutinin-esterase-fusion glycoprotein</fullName>
        <shortName>HEF</shortName>
        <ecNumber>3.1.1.53</ecNumber>
    </recommendedName>
    <component>
        <recommendedName>
            <fullName>Hemagglutinin-esterase-fusion glycoprotein chain 1</fullName>
            <shortName>HEF1</shortName>
        </recommendedName>
    </component>
    <component>
        <recommendedName>
            <fullName>Hemagglutinin-esterase-fusion glycoprotein chain 2</fullName>
            <shortName>HEF2</shortName>
        </recommendedName>
    </component>
</protein>
<organismHost>
    <name type="scientific">Homo sapiens</name>
    <name type="common">Human</name>
    <dbReference type="NCBI Taxonomy" id="9606"/>
</organismHost>
<organismHost>
    <name type="scientific">Sus scrofa</name>
    <name type="common">Pig</name>
    <dbReference type="NCBI Taxonomy" id="9823"/>
</organismHost>